<reference key="1">
    <citation type="journal article" date="2002" name="Int. J. Oncol.">
        <title>Molecular cloning and characterization of ST7R (ST7-like, ST7L) on human chromosome 1p13, a novel gene homologous to tumor suppressor gene ST7 on human chromosome 7q31.</title>
        <authorList>
            <person name="Katoh M."/>
        </authorList>
    </citation>
    <scope>NUCLEOTIDE SEQUENCE [MRNA] (ISOFORMS 1; 2; 3 AND 5)</scope>
</reference>
<reference key="2">
    <citation type="journal article" date="2004" name="Nat. Genet.">
        <title>Complete sequencing and characterization of 21,243 full-length human cDNAs.</title>
        <authorList>
            <person name="Ota T."/>
            <person name="Suzuki Y."/>
            <person name="Nishikawa T."/>
            <person name="Otsuki T."/>
            <person name="Sugiyama T."/>
            <person name="Irie R."/>
            <person name="Wakamatsu A."/>
            <person name="Hayashi K."/>
            <person name="Sato H."/>
            <person name="Nagai K."/>
            <person name="Kimura K."/>
            <person name="Makita H."/>
            <person name="Sekine M."/>
            <person name="Obayashi M."/>
            <person name="Nishi T."/>
            <person name="Shibahara T."/>
            <person name="Tanaka T."/>
            <person name="Ishii S."/>
            <person name="Yamamoto J."/>
            <person name="Saito K."/>
            <person name="Kawai Y."/>
            <person name="Isono Y."/>
            <person name="Nakamura Y."/>
            <person name="Nagahari K."/>
            <person name="Murakami K."/>
            <person name="Yasuda T."/>
            <person name="Iwayanagi T."/>
            <person name="Wagatsuma M."/>
            <person name="Shiratori A."/>
            <person name="Sudo H."/>
            <person name="Hosoiri T."/>
            <person name="Kaku Y."/>
            <person name="Kodaira H."/>
            <person name="Kondo H."/>
            <person name="Sugawara M."/>
            <person name="Takahashi M."/>
            <person name="Kanda K."/>
            <person name="Yokoi T."/>
            <person name="Furuya T."/>
            <person name="Kikkawa E."/>
            <person name="Omura Y."/>
            <person name="Abe K."/>
            <person name="Kamihara K."/>
            <person name="Katsuta N."/>
            <person name="Sato K."/>
            <person name="Tanikawa M."/>
            <person name="Yamazaki M."/>
            <person name="Ninomiya K."/>
            <person name="Ishibashi T."/>
            <person name="Yamashita H."/>
            <person name="Murakawa K."/>
            <person name="Fujimori K."/>
            <person name="Tanai H."/>
            <person name="Kimata M."/>
            <person name="Watanabe M."/>
            <person name="Hiraoka S."/>
            <person name="Chiba Y."/>
            <person name="Ishida S."/>
            <person name="Ono Y."/>
            <person name="Takiguchi S."/>
            <person name="Watanabe S."/>
            <person name="Yosida M."/>
            <person name="Hotuta T."/>
            <person name="Kusano J."/>
            <person name="Kanehori K."/>
            <person name="Takahashi-Fujii A."/>
            <person name="Hara H."/>
            <person name="Tanase T.-O."/>
            <person name="Nomura Y."/>
            <person name="Togiya S."/>
            <person name="Komai F."/>
            <person name="Hara R."/>
            <person name="Takeuchi K."/>
            <person name="Arita M."/>
            <person name="Imose N."/>
            <person name="Musashino K."/>
            <person name="Yuuki H."/>
            <person name="Oshima A."/>
            <person name="Sasaki N."/>
            <person name="Aotsuka S."/>
            <person name="Yoshikawa Y."/>
            <person name="Matsunawa H."/>
            <person name="Ichihara T."/>
            <person name="Shiohata N."/>
            <person name="Sano S."/>
            <person name="Moriya S."/>
            <person name="Momiyama H."/>
            <person name="Satoh N."/>
            <person name="Takami S."/>
            <person name="Terashima Y."/>
            <person name="Suzuki O."/>
            <person name="Nakagawa S."/>
            <person name="Senoh A."/>
            <person name="Mizoguchi H."/>
            <person name="Goto Y."/>
            <person name="Shimizu F."/>
            <person name="Wakebe H."/>
            <person name="Hishigaki H."/>
            <person name="Watanabe T."/>
            <person name="Sugiyama A."/>
            <person name="Takemoto M."/>
            <person name="Kawakami B."/>
            <person name="Yamazaki M."/>
            <person name="Watanabe K."/>
            <person name="Kumagai A."/>
            <person name="Itakura S."/>
            <person name="Fukuzumi Y."/>
            <person name="Fujimori Y."/>
            <person name="Komiyama M."/>
            <person name="Tashiro H."/>
            <person name="Tanigami A."/>
            <person name="Fujiwara T."/>
            <person name="Ono T."/>
            <person name="Yamada K."/>
            <person name="Fujii Y."/>
            <person name="Ozaki K."/>
            <person name="Hirao M."/>
            <person name="Ohmori Y."/>
            <person name="Kawabata A."/>
            <person name="Hikiji T."/>
            <person name="Kobatake N."/>
            <person name="Inagaki H."/>
            <person name="Ikema Y."/>
            <person name="Okamoto S."/>
            <person name="Okitani R."/>
            <person name="Kawakami T."/>
            <person name="Noguchi S."/>
            <person name="Itoh T."/>
            <person name="Shigeta K."/>
            <person name="Senba T."/>
            <person name="Matsumura K."/>
            <person name="Nakajima Y."/>
            <person name="Mizuno T."/>
            <person name="Morinaga M."/>
            <person name="Sasaki M."/>
            <person name="Togashi T."/>
            <person name="Oyama M."/>
            <person name="Hata H."/>
            <person name="Watanabe M."/>
            <person name="Komatsu T."/>
            <person name="Mizushima-Sugano J."/>
            <person name="Satoh T."/>
            <person name="Shirai Y."/>
            <person name="Takahashi Y."/>
            <person name="Nakagawa K."/>
            <person name="Okumura K."/>
            <person name="Nagase T."/>
            <person name="Nomura N."/>
            <person name="Kikuchi H."/>
            <person name="Masuho Y."/>
            <person name="Yamashita R."/>
            <person name="Nakai K."/>
            <person name="Yada T."/>
            <person name="Nakamura Y."/>
            <person name="Ohara O."/>
            <person name="Isogai T."/>
            <person name="Sugano S."/>
        </authorList>
    </citation>
    <scope>NUCLEOTIDE SEQUENCE [LARGE SCALE MRNA] (ISOFORMS 1 AND 4)</scope>
    <scope>VARIANT GLN-451</scope>
    <source>
        <tissue>Testis</tissue>
    </source>
</reference>
<reference key="3">
    <citation type="journal article" date="2007" name="BMC Genomics">
        <title>The full-ORF clone resource of the German cDNA consortium.</title>
        <authorList>
            <person name="Bechtel S."/>
            <person name="Rosenfelder H."/>
            <person name="Duda A."/>
            <person name="Schmidt C.P."/>
            <person name="Ernst U."/>
            <person name="Wellenreuther R."/>
            <person name="Mehrle A."/>
            <person name="Schuster C."/>
            <person name="Bahr A."/>
            <person name="Bloecker H."/>
            <person name="Heubner D."/>
            <person name="Hoerlein A."/>
            <person name="Michel G."/>
            <person name="Wedler H."/>
            <person name="Koehrer K."/>
            <person name="Ottenwaelder B."/>
            <person name="Poustka A."/>
            <person name="Wiemann S."/>
            <person name="Schupp I."/>
        </authorList>
    </citation>
    <scope>NUCLEOTIDE SEQUENCE [LARGE SCALE MRNA] (ISOFORMS 6 AND 7)</scope>
    <scope>NUCLEOTIDE SEQUENCE [LARGE SCALE MRNA] OF 225-575 (ISOFORM 2)</scope>
    <source>
        <tissue>Rectum tumor</tissue>
        <tissue>Testis</tissue>
        <tissue>Uterus</tissue>
    </source>
</reference>
<reference key="4">
    <citation type="journal article" date="2006" name="Nature">
        <title>The DNA sequence and biological annotation of human chromosome 1.</title>
        <authorList>
            <person name="Gregory S.G."/>
            <person name="Barlow K.F."/>
            <person name="McLay K.E."/>
            <person name="Kaul R."/>
            <person name="Swarbreck D."/>
            <person name="Dunham A."/>
            <person name="Scott C.E."/>
            <person name="Howe K.L."/>
            <person name="Woodfine K."/>
            <person name="Spencer C.C.A."/>
            <person name="Jones M.C."/>
            <person name="Gillson C."/>
            <person name="Searle S."/>
            <person name="Zhou Y."/>
            <person name="Kokocinski F."/>
            <person name="McDonald L."/>
            <person name="Evans R."/>
            <person name="Phillips K."/>
            <person name="Atkinson A."/>
            <person name="Cooper R."/>
            <person name="Jones C."/>
            <person name="Hall R.E."/>
            <person name="Andrews T.D."/>
            <person name="Lloyd C."/>
            <person name="Ainscough R."/>
            <person name="Almeida J.P."/>
            <person name="Ambrose K.D."/>
            <person name="Anderson F."/>
            <person name="Andrew R.W."/>
            <person name="Ashwell R.I.S."/>
            <person name="Aubin K."/>
            <person name="Babbage A.K."/>
            <person name="Bagguley C.L."/>
            <person name="Bailey J."/>
            <person name="Beasley H."/>
            <person name="Bethel G."/>
            <person name="Bird C.P."/>
            <person name="Bray-Allen S."/>
            <person name="Brown J.Y."/>
            <person name="Brown A.J."/>
            <person name="Buckley D."/>
            <person name="Burton J."/>
            <person name="Bye J."/>
            <person name="Carder C."/>
            <person name="Chapman J.C."/>
            <person name="Clark S.Y."/>
            <person name="Clarke G."/>
            <person name="Clee C."/>
            <person name="Cobley V."/>
            <person name="Collier R.E."/>
            <person name="Corby N."/>
            <person name="Coville G.J."/>
            <person name="Davies J."/>
            <person name="Deadman R."/>
            <person name="Dunn M."/>
            <person name="Earthrowl M."/>
            <person name="Ellington A.G."/>
            <person name="Errington H."/>
            <person name="Frankish A."/>
            <person name="Frankland J."/>
            <person name="French L."/>
            <person name="Garner P."/>
            <person name="Garnett J."/>
            <person name="Gay L."/>
            <person name="Ghori M.R.J."/>
            <person name="Gibson R."/>
            <person name="Gilby L.M."/>
            <person name="Gillett W."/>
            <person name="Glithero R.J."/>
            <person name="Grafham D.V."/>
            <person name="Griffiths C."/>
            <person name="Griffiths-Jones S."/>
            <person name="Grocock R."/>
            <person name="Hammond S."/>
            <person name="Harrison E.S.I."/>
            <person name="Hart E."/>
            <person name="Haugen E."/>
            <person name="Heath P.D."/>
            <person name="Holmes S."/>
            <person name="Holt K."/>
            <person name="Howden P.J."/>
            <person name="Hunt A.R."/>
            <person name="Hunt S.E."/>
            <person name="Hunter G."/>
            <person name="Isherwood J."/>
            <person name="James R."/>
            <person name="Johnson C."/>
            <person name="Johnson D."/>
            <person name="Joy A."/>
            <person name="Kay M."/>
            <person name="Kershaw J.K."/>
            <person name="Kibukawa M."/>
            <person name="Kimberley A.M."/>
            <person name="King A."/>
            <person name="Knights A.J."/>
            <person name="Lad H."/>
            <person name="Laird G."/>
            <person name="Lawlor S."/>
            <person name="Leongamornlert D.A."/>
            <person name="Lloyd D.M."/>
            <person name="Loveland J."/>
            <person name="Lovell J."/>
            <person name="Lush M.J."/>
            <person name="Lyne R."/>
            <person name="Martin S."/>
            <person name="Mashreghi-Mohammadi M."/>
            <person name="Matthews L."/>
            <person name="Matthews N.S.W."/>
            <person name="McLaren S."/>
            <person name="Milne S."/>
            <person name="Mistry S."/>
            <person name="Moore M.J.F."/>
            <person name="Nickerson T."/>
            <person name="O'Dell C.N."/>
            <person name="Oliver K."/>
            <person name="Palmeiri A."/>
            <person name="Palmer S.A."/>
            <person name="Parker A."/>
            <person name="Patel D."/>
            <person name="Pearce A.V."/>
            <person name="Peck A.I."/>
            <person name="Pelan S."/>
            <person name="Phelps K."/>
            <person name="Phillimore B.J."/>
            <person name="Plumb R."/>
            <person name="Rajan J."/>
            <person name="Raymond C."/>
            <person name="Rouse G."/>
            <person name="Saenphimmachak C."/>
            <person name="Sehra H.K."/>
            <person name="Sheridan E."/>
            <person name="Shownkeen R."/>
            <person name="Sims S."/>
            <person name="Skuce C.D."/>
            <person name="Smith M."/>
            <person name="Steward C."/>
            <person name="Subramanian S."/>
            <person name="Sycamore N."/>
            <person name="Tracey A."/>
            <person name="Tromans A."/>
            <person name="Van Helmond Z."/>
            <person name="Wall M."/>
            <person name="Wallis J.M."/>
            <person name="White S."/>
            <person name="Whitehead S.L."/>
            <person name="Wilkinson J.E."/>
            <person name="Willey D.L."/>
            <person name="Williams H."/>
            <person name="Wilming L."/>
            <person name="Wray P.W."/>
            <person name="Wu Z."/>
            <person name="Coulson A."/>
            <person name="Vaudin M."/>
            <person name="Sulston J.E."/>
            <person name="Durbin R.M."/>
            <person name="Hubbard T."/>
            <person name="Wooster R."/>
            <person name="Dunham I."/>
            <person name="Carter N.P."/>
            <person name="McVean G."/>
            <person name="Ross M.T."/>
            <person name="Harrow J."/>
            <person name="Olson M.V."/>
            <person name="Beck S."/>
            <person name="Rogers J."/>
            <person name="Bentley D.R."/>
        </authorList>
    </citation>
    <scope>NUCLEOTIDE SEQUENCE [LARGE SCALE GENOMIC DNA]</scope>
</reference>
<reference key="5">
    <citation type="submission" date="2005-07" db="EMBL/GenBank/DDBJ databases">
        <authorList>
            <person name="Mural R.J."/>
            <person name="Istrail S."/>
            <person name="Sutton G.G."/>
            <person name="Florea L."/>
            <person name="Halpern A.L."/>
            <person name="Mobarry C.M."/>
            <person name="Lippert R."/>
            <person name="Walenz B."/>
            <person name="Shatkay H."/>
            <person name="Dew I."/>
            <person name="Miller J.R."/>
            <person name="Flanigan M.J."/>
            <person name="Edwards N.J."/>
            <person name="Bolanos R."/>
            <person name="Fasulo D."/>
            <person name="Halldorsson B.V."/>
            <person name="Hannenhalli S."/>
            <person name="Turner R."/>
            <person name="Yooseph S."/>
            <person name="Lu F."/>
            <person name="Nusskern D.R."/>
            <person name="Shue B.C."/>
            <person name="Zheng X.H."/>
            <person name="Zhong F."/>
            <person name="Delcher A.L."/>
            <person name="Huson D.H."/>
            <person name="Kravitz S.A."/>
            <person name="Mouchard L."/>
            <person name="Reinert K."/>
            <person name="Remington K.A."/>
            <person name="Clark A.G."/>
            <person name="Waterman M.S."/>
            <person name="Eichler E.E."/>
            <person name="Adams M.D."/>
            <person name="Hunkapiller M.W."/>
            <person name="Myers E.W."/>
            <person name="Venter J.C."/>
        </authorList>
    </citation>
    <scope>NUCLEOTIDE SEQUENCE [LARGE SCALE GENOMIC DNA]</scope>
</reference>
<reference key="6">
    <citation type="journal article" date="2004" name="Genome Res.">
        <title>The status, quality, and expansion of the NIH full-length cDNA project: the Mammalian Gene Collection (MGC).</title>
        <authorList>
            <consortium name="The MGC Project Team"/>
        </authorList>
    </citation>
    <scope>NUCLEOTIDE SEQUENCE [LARGE SCALE MRNA] (ISOFORMS 1; 7 AND 8)</scope>
    <source>
        <tissue>Brain</tissue>
        <tissue>Duodenum</tissue>
        <tissue>Testis</tissue>
    </source>
</reference>
<gene>
    <name type="primary">ST7L</name>
    <name type="synonym">ST7R</name>
</gene>
<sequence>MADRGGVGEAAAVGASPASVPGLNPTLGWRERLRAGLAGTGASLWFVAGLGLLYALRIPLRLCENLAAVTVFLNSLTPKFYVALTGTSSLISGLIFIFEWWYFHKHGTSFIEQVSVSHLQPLMGGTESSISEPGSPSRNRENETSRQNLSECKVWRNPLNLFRGAEYRRYTWVTGKEPLTYYDMNLSAQDHQTFFTCDTDFLRPSDTVMQKAWRERNPPARIKAAYQALELNNDCATAYVLLAEEEATTIVDAERLFKQALKAGETIYRQSQQCQHQSPQHEAQLRRDTNVLVYIKRRLAMCARKLGRIREAVKIMRDLMKEFPPLTMLNIHENLLESLLELQAYPDVQAVLAKYDDISLPKSAAICYTAALLKTRTVSEKFSPETASRRGLSTAEINAVEAIHRAVEFNPHVPKYLLEMKSLILPPEHILKRGDSEAIAYAFFHLQHWKRIEGALNLLQCTWEGTFRMIPYPLEKGHLFYPYPSCTETADRELLPTFHHVSVYPKKELPLFIHFTAGFCSSTAMIAILTHQFPEIMGIFAKAVLGLWCPQPWASSGFEENTQDLKSEDLGLSSG</sequence>
<organism>
    <name type="scientific">Homo sapiens</name>
    <name type="common">Human</name>
    <dbReference type="NCBI Taxonomy" id="9606"/>
    <lineage>
        <taxon>Eukaryota</taxon>
        <taxon>Metazoa</taxon>
        <taxon>Chordata</taxon>
        <taxon>Craniata</taxon>
        <taxon>Vertebrata</taxon>
        <taxon>Euteleostomi</taxon>
        <taxon>Mammalia</taxon>
        <taxon>Eutheria</taxon>
        <taxon>Euarchontoglires</taxon>
        <taxon>Primates</taxon>
        <taxon>Haplorrhini</taxon>
        <taxon>Catarrhini</taxon>
        <taxon>Hominidae</taxon>
        <taxon>Homo</taxon>
    </lineage>
</organism>
<keyword id="KW-0025">Alternative splicing</keyword>
<keyword id="KW-0472">Membrane</keyword>
<keyword id="KW-1267">Proteomics identification</keyword>
<keyword id="KW-1185">Reference proteome</keyword>
<keyword id="KW-0812">Transmembrane</keyword>
<keyword id="KW-1133">Transmembrane helix</keyword>
<proteinExistence type="evidence at protein level"/>
<protein>
    <recommendedName>
        <fullName>Suppressor of tumorigenicity 7 protein-like</fullName>
    </recommendedName>
    <alternativeName>
        <fullName>ST7-related protein</fullName>
    </alternativeName>
</protein>
<comment type="subcellular location">
    <subcellularLocation>
        <location evidence="8">Membrane</location>
        <topology evidence="8">Multi-pass membrane protein</topology>
    </subcellularLocation>
</comment>
<comment type="alternative products">
    <event type="alternative splicing"/>
    <isoform>
        <id>Q8TDW4-1</id>
        <name>1</name>
        <sequence type="displayed"/>
    </isoform>
    <isoform>
        <id>Q8TDW4-2</id>
        <name>2</name>
        <sequence type="described" ref="VSP_034131"/>
    </isoform>
    <isoform>
        <id>Q8TDW4-3</id>
        <name>3</name>
        <sequence type="described" ref="VSP_034129"/>
    </isoform>
    <isoform>
        <id>Q8TDW4-4</id>
        <name>4</name>
        <sequence type="described" ref="VSP_034127"/>
    </isoform>
    <isoform>
        <id>Q8TDW4-5</id>
        <name>5</name>
        <sequence type="described" ref="VSP_034134 VSP_034135"/>
    </isoform>
    <isoform>
        <id>Q8TDW4-6</id>
        <name>6</name>
        <sequence type="described" ref="VSP_034129 VSP_034134 VSP_034135"/>
    </isoform>
    <isoform>
        <id>Q8TDW4-7</id>
        <name>7</name>
        <sequence type="described" ref="VSP_034133 VSP_034136"/>
    </isoform>
    <isoform>
        <id>Q8TDW4-8</id>
        <name>8</name>
        <sequence type="described" ref="VSP_034128 VSP_034130 VSP_034132"/>
    </isoform>
</comment>
<comment type="similarity">
    <text evidence="8">Belongs to the ST7 family.</text>
</comment>
<comment type="sequence caution" evidence="8">
    <conflict type="erroneous initiation">
        <sequence resource="EMBL-CDS" id="BAA91060"/>
    </conflict>
</comment>
<comment type="sequence caution" evidence="8">
    <conflict type="erroneous initiation">
        <sequence resource="EMBL-CDS" id="CAE45803"/>
    </conflict>
</comment>
<dbReference type="EMBL" id="AB081317">
    <property type="protein sequence ID" value="BAB88871.1"/>
    <property type="molecule type" value="mRNA"/>
</dbReference>
<dbReference type="EMBL" id="AB081318">
    <property type="protein sequence ID" value="BAB88872.1"/>
    <property type="molecule type" value="mRNA"/>
</dbReference>
<dbReference type="EMBL" id="AB081319">
    <property type="protein sequence ID" value="BAB88873.1"/>
    <property type="molecule type" value="mRNA"/>
</dbReference>
<dbReference type="EMBL" id="AB081320">
    <property type="protein sequence ID" value="BAB88874.1"/>
    <property type="molecule type" value="mRNA"/>
</dbReference>
<dbReference type="EMBL" id="AK000291">
    <property type="protein sequence ID" value="BAA91060.1"/>
    <property type="status" value="ALT_INIT"/>
    <property type="molecule type" value="mRNA"/>
</dbReference>
<dbReference type="EMBL" id="AK097837">
    <property type="protein sequence ID" value="BAC05180.1"/>
    <property type="molecule type" value="mRNA"/>
</dbReference>
<dbReference type="EMBL" id="AK291042">
    <property type="protein sequence ID" value="BAF83731.1"/>
    <property type="molecule type" value="mRNA"/>
</dbReference>
<dbReference type="EMBL" id="BX537988">
    <property type="protein sequence ID" value="CAD97948.1"/>
    <property type="molecule type" value="mRNA"/>
</dbReference>
<dbReference type="EMBL" id="BX538338">
    <property type="protein sequence ID" value="CAD98103.1"/>
    <property type="molecule type" value="mRNA"/>
</dbReference>
<dbReference type="EMBL" id="BX640667">
    <property type="protein sequence ID" value="CAE45803.1"/>
    <property type="status" value="ALT_INIT"/>
    <property type="molecule type" value="mRNA"/>
</dbReference>
<dbReference type="EMBL" id="AL109932">
    <property type="status" value="NOT_ANNOTATED_CDS"/>
    <property type="molecule type" value="Genomic_DNA"/>
</dbReference>
<dbReference type="EMBL" id="AL929470">
    <property type="status" value="NOT_ANNOTATED_CDS"/>
    <property type="molecule type" value="Genomic_DNA"/>
</dbReference>
<dbReference type="EMBL" id="CH471122">
    <property type="protein sequence ID" value="EAW56520.1"/>
    <property type="molecule type" value="Genomic_DNA"/>
</dbReference>
<dbReference type="EMBL" id="CH471122">
    <property type="protein sequence ID" value="EAW56522.1"/>
    <property type="molecule type" value="Genomic_DNA"/>
</dbReference>
<dbReference type="EMBL" id="CH471122">
    <property type="protein sequence ID" value="EAW56523.1"/>
    <property type="molecule type" value="Genomic_DNA"/>
</dbReference>
<dbReference type="EMBL" id="CH471122">
    <property type="protein sequence ID" value="EAW56524.1"/>
    <property type="molecule type" value="Genomic_DNA"/>
</dbReference>
<dbReference type="EMBL" id="BC037830">
    <property type="protein sequence ID" value="AAH37830.1"/>
    <property type="molecule type" value="mRNA"/>
</dbReference>
<dbReference type="EMBL" id="BC047392">
    <property type="protein sequence ID" value="AAH47392.1"/>
    <property type="molecule type" value="mRNA"/>
</dbReference>
<dbReference type="EMBL" id="BC065501">
    <property type="protein sequence ID" value="AAH65501.1"/>
    <property type="molecule type" value="mRNA"/>
</dbReference>
<dbReference type="CCDS" id="CCDS76189.1">
    <molecule id="Q8TDW4-4"/>
</dbReference>
<dbReference type="CCDS" id="CCDS848.1">
    <molecule id="Q8TDW4-1"/>
</dbReference>
<dbReference type="CCDS" id="CCDS849.1">
    <molecule id="Q8TDW4-3"/>
</dbReference>
<dbReference type="CCDS" id="CCDS850.1">
    <molecule id="Q8TDW4-2"/>
</dbReference>
<dbReference type="CCDS" id="CCDS852.1">
    <molecule id="Q8TDW4-5"/>
</dbReference>
<dbReference type="RefSeq" id="NP_001295193.1">
    <molecule id="Q8TDW4-4"/>
    <property type="nucleotide sequence ID" value="NM_001308264.2"/>
</dbReference>
<dbReference type="RefSeq" id="NP_060214.2">
    <molecule id="Q8TDW4-1"/>
    <property type="nucleotide sequence ID" value="NM_017744.4"/>
</dbReference>
<dbReference type="RefSeq" id="NP_620055.1">
    <molecule id="Q8TDW4-3"/>
    <property type="nucleotide sequence ID" value="NM_138727.4"/>
</dbReference>
<dbReference type="RefSeq" id="NP_620056.1">
    <molecule id="Q8TDW4-2"/>
    <property type="nucleotide sequence ID" value="NM_138728.3"/>
</dbReference>
<dbReference type="RefSeq" id="NP_620057.1">
    <molecule id="Q8TDW4-5"/>
    <property type="nucleotide sequence ID" value="NM_138729.4"/>
</dbReference>
<dbReference type="RefSeq" id="XP_047279297.1">
    <molecule id="Q8TDW4-1"/>
    <property type="nucleotide sequence ID" value="XM_047423341.1"/>
</dbReference>
<dbReference type="RefSeq" id="XP_047279330.1">
    <molecule id="Q8TDW4-4"/>
    <property type="nucleotide sequence ID" value="XM_047423374.1"/>
</dbReference>
<dbReference type="RefSeq" id="XP_054193207.1">
    <molecule id="Q8TDW4-7"/>
    <property type="nucleotide sequence ID" value="XM_054337232.1"/>
</dbReference>
<dbReference type="RefSeq" id="XP_054193221.1">
    <molecule id="Q8TDW4-4"/>
    <property type="nucleotide sequence ID" value="XM_054337246.1"/>
</dbReference>
<dbReference type="SMR" id="Q8TDW4"/>
<dbReference type="BioGRID" id="120227">
    <property type="interactions" value="38"/>
</dbReference>
<dbReference type="FunCoup" id="Q8TDW4">
    <property type="interactions" value="1665"/>
</dbReference>
<dbReference type="IntAct" id="Q8TDW4">
    <property type="interactions" value="36"/>
</dbReference>
<dbReference type="STRING" id="9606.ENSP00000350734"/>
<dbReference type="iPTMnet" id="Q8TDW4"/>
<dbReference type="PhosphoSitePlus" id="Q8TDW4"/>
<dbReference type="SwissPalm" id="Q8TDW4"/>
<dbReference type="BioMuta" id="ST7L"/>
<dbReference type="DMDM" id="74751431"/>
<dbReference type="jPOST" id="Q8TDW4"/>
<dbReference type="MassIVE" id="Q8TDW4"/>
<dbReference type="PaxDb" id="9606-ENSP00000350734"/>
<dbReference type="PeptideAtlas" id="Q8TDW4"/>
<dbReference type="ProteomicsDB" id="74346">
    <molecule id="Q8TDW4-1"/>
</dbReference>
<dbReference type="ProteomicsDB" id="74347">
    <molecule id="Q8TDW4-2"/>
</dbReference>
<dbReference type="ProteomicsDB" id="74348">
    <molecule id="Q8TDW4-3"/>
</dbReference>
<dbReference type="ProteomicsDB" id="74349">
    <molecule id="Q8TDW4-4"/>
</dbReference>
<dbReference type="ProteomicsDB" id="74350">
    <molecule id="Q8TDW4-5"/>
</dbReference>
<dbReference type="ProteomicsDB" id="74351">
    <molecule id="Q8TDW4-6"/>
</dbReference>
<dbReference type="ProteomicsDB" id="74352">
    <molecule id="Q8TDW4-7"/>
</dbReference>
<dbReference type="ProteomicsDB" id="74353">
    <molecule id="Q8TDW4-8"/>
</dbReference>
<dbReference type="Antibodypedia" id="46941">
    <property type="antibodies" value="38 antibodies from 16 providers"/>
</dbReference>
<dbReference type="DNASU" id="54879"/>
<dbReference type="Ensembl" id="ENST00000343210.11">
    <molecule id="Q8TDW4-5"/>
    <property type="protein sequence ID" value="ENSP00000345312.7"/>
    <property type="gene ID" value="ENSG00000007341.19"/>
</dbReference>
<dbReference type="Ensembl" id="ENST00000358039.9">
    <molecule id="Q8TDW4-1"/>
    <property type="protein sequence ID" value="ENSP00000350734.4"/>
    <property type="gene ID" value="ENSG00000007341.19"/>
</dbReference>
<dbReference type="Ensembl" id="ENST00000360743.8">
    <molecule id="Q8TDW4-2"/>
    <property type="protein sequence ID" value="ENSP00000353972.4"/>
    <property type="gene ID" value="ENSG00000007341.19"/>
</dbReference>
<dbReference type="Ensembl" id="ENST00000361846.7">
    <molecule id="Q8TDW4-7"/>
    <property type="protein sequence ID" value="ENSP00000436499.1"/>
    <property type="gene ID" value="ENSG00000007341.19"/>
</dbReference>
<dbReference type="Ensembl" id="ENST00000369666.5">
    <molecule id="Q8TDW4-6"/>
    <property type="protein sequence ID" value="ENSP00000358680.1"/>
    <property type="gene ID" value="ENSG00000007341.19"/>
</dbReference>
<dbReference type="Ensembl" id="ENST00000369669.5">
    <molecule id="Q8TDW4-4"/>
    <property type="protein sequence ID" value="ENSP00000358683.1"/>
    <property type="gene ID" value="ENSG00000007341.19"/>
</dbReference>
<dbReference type="Ensembl" id="ENST00000490067.5">
    <molecule id="Q8TDW4-3"/>
    <property type="protein sequence ID" value="ENSP00000417140.1"/>
    <property type="gene ID" value="ENSG00000007341.19"/>
</dbReference>
<dbReference type="Ensembl" id="ENST00000490715.5">
    <molecule id="Q8TDW4-7"/>
    <property type="protein sequence ID" value="ENSP00000436544.1"/>
    <property type="gene ID" value="ENSG00000007341.19"/>
</dbReference>
<dbReference type="GeneID" id="54879"/>
<dbReference type="KEGG" id="hsa:54879"/>
<dbReference type="MANE-Select" id="ENST00000358039.9">
    <property type="protein sequence ID" value="ENSP00000350734.4"/>
    <property type="RefSeq nucleotide sequence ID" value="NM_017744.5"/>
    <property type="RefSeq protein sequence ID" value="NP_060214.2"/>
</dbReference>
<dbReference type="UCSC" id="uc001ecc.4">
    <molecule id="Q8TDW4-1"/>
    <property type="organism name" value="human"/>
</dbReference>
<dbReference type="AGR" id="HGNC:18441"/>
<dbReference type="CTD" id="54879"/>
<dbReference type="DisGeNET" id="54879"/>
<dbReference type="GeneCards" id="ST7L"/>
<dbReference type="HGNC" id="HGNC:18441">
    <property type="gene designation" value="ST7L"/>
</dbReference>
<dbReference type="HPA" id="ENSG00000007341">
    <property type="expression patterns" value="Tissue enriched (testis)"/>
</dbReference>
<dbReference type="MIM" id="617640">
    <property type="type" value="gene"/>
</dbReference>
<dbReference type="neXtProt" id="NX_Q8TDW4"/>
<dbReference type="OpenTargets" id="ENSG00000007341"/>
<dbReference type="PharmGKB" id="PA38331"/>
<dbReference type="VEuPathDB" id="HostDB:ENSG00000007341"/>
<dbReference type="eggNOG" id="KOG3807">
    <property type="taxonomic scope" value="Eukaryota"/>
</dbReference>
<dbReference type="GeneTree" id="ENSGT00390000000873"/>
<dbReference type="HOGENOM" id="CLU_035578_2_0_1"/>
<dbReference type="InParanoid" id="Q8TDW4"/>
<dbReference type="OMA" id="QDYEIMQ"/>
<dbReference type="OrthoDB" id="5914722at2759"/>
<dbReference type="PAN-GO" id="Q8TDW4">
    <property type="GO annotations" value="0 GO annotations based on evolutionary models"/>
</dbReference>
<dbReference type="PhylomeDB" id="Q8TDW4"/>
<dbReference type="TreeFam" id="TF314162"/>
<dbReference type="PathwayCommons" id="Q8TDW4"/>
<dbReference type="SignaLink" id="Q8TDW4"/>
<dbReference type="BioGRID-ORCS" id="54879">
    <property type="hits" value="7 hits in 1153 CRISPR screens"/>
</dbReference>
<dbReference type="ChiTaRS" id="ST7L">
    <property type="organism name" value="human"/>
</dbReference>
<dbReference type="GenomeRNAi" id="54879"/>
<dbReference type="Pharos" id="Q8TDW4">
    <property type="development level" value="Tbio"/>
</dbReference>
<dbReference type="PRO" id="PR:Q8TDW4"/>
<dbReference type="Proteomes" id="UP000005640">
    <property type="component" value="Chromosome 1"/>
</dbReference>
<dbReference type="RNAct" id="Q8TDW4">
    <property type="molecule type" value="protein"/>
</dbReference>
<dbReference type="Bgee" id="ENSG00000007341">
    <property type="expression patterns" value="Expressed in sperm and 135 other cell types or tissues"/>
</dbReference>
<dbReference type="ExpressionAtlas" id="Q8TDW4">
    <property type="expression patterns" value="baseline and differential"/>
</dbReference>
<dbReference type="GO" id="GO:0016020">
    <property type="term" value="C:membrane"/>
    <property type="evidence" value="ECO:0007669"/>
    <property type="project" value="UniProtKB-SubCell"/>
</dbReference>
<dbReference type="GO" id="GO:0030308">
    <property type="term" value="P:negative regulation of cell growth"/>
    <property type="evidence" value="ECO:0000250"/>
    <property type="project" value="BHF-UCL"/>
</dbReference>
<dbReference type="CDD" id="cd11557">
    <property type="entry name" value="ST7"/>
    <property type="match status" value="1"/>
</dbReference>
<dbReference type="Gene3D" id="1.25.40.10">
    <property type="entry name" value="Tetratricopeptide repeat domain"/>
    <property type="match status" value="1"/>
</dbReference>
<dbReference type="InterPro" id="IPR007311">
    <property type="entry name" value="ST7"/>
</dbReference>
<dbReference type="InterPro" id="IPR011990">
    <property type="entry name" value="TPR-like_helical_dom_sf"/>
</dbReference>
<dbReference type="PANTHER" id="PTHR12745">
    <property type="entry name" value="SUPPRESSION OF TUMORIGENICITY 7"/>
    <property type="match status" value="1"/>
</dbReference>
<dbReference type="PANTHER" id="PTHR12745:SF4">
    <property type="entry name" value="SUPPRESSOR OF TUMORIGENICITY 7 PROTEIN-LIKE"/>
    <property type="match status" value="1"/>
</dbReference>
<dbReference type="Pfam" id="PF04184">
    <property type="entry name" value="ST7"/>
    <property type="match status" value="1"/>
</dbReference>
<name>ST7L_HUMAN</name>
<feature type="chain" id="PRO_0000339227" description="Suppressor of tumorigenicity 7 protein-like">
    <location>
        <begin position="1"/>
        <end position="575"/>
    </location>
</feature>
<feature type="transmembrane region" description="Helical" evidence="1">
    <location>
        <begin position="36"/>
        <end position="56"/>
    </location>
</feature>
<feature type="transmembrane region" description="Helical" evidence="1">
    <location>
        <begin position="80"/>
        <end position="100"/>
    </location>
</feature>
<feature type="region of interest" description="Disordered" evidence="2">
    <location>
        <begin position="125"/>
        <end position="147"/>
    </location>
</feature>
<feature type="compositionally biased region" description="Polar residues" evidence="2">
    <location>
        <begin position="126"/>
        <end position="137"/>
    </location>
</feature>
<feature type="splice variant" id="VSP_034127" description="In isoform 4." evidence="5">
    <location>
        <begin position="1"/>
        <end position="183"/>
    </location>
</feature>
<feature type="splice variant" id="VSP_034128" description="In isoform 8." evidence="6">
    <location>
        <begin position="1"/>
        <end position="122"/>
    </location>
</feature>
<feature type="splice variant" id="VSP_034129" description="In isoform 3 and isoform 6." evidence="4 7">
    <location>
        <begin position="69"/>
        <end position="85"/>
    </location>
</feature>
<feature type="splice variant" id="VSP_034130" description="In isoform 8." evidence="6">
    <original>YLLEMKSLILPPEHILKRGDSEAIAYAFFHLQHWKRIEGALNLLQCTWEGTFRMIPYPLEKGHLFYPYPSCTETADRELLPTFHHVSV</original>
    <variation>VEIYPFSPQLNIKAVDNSAISKYPANIY</variation>
    <location>
        <begin position="416"/>
        <end position="503"/>
    </location>
</feature>
<feature type="splice variant" id="VSP_034131" description="In isoform 2." evidence="4 7">
    <location>
        <begin position="466"/>
        <end position="496"/>
    </location>
</feature>
<feature type="splice variant" id="VSP_034132" description="In isoform 8." evidence="6">
    <location>
        <begin position="504"/>
        <end position="575"/>
    </location>
</feature>
<feature type="splice variant" id="VSP_034133" description="In isoform 7." evidence="6 7">
    <original>LGLWCPQPWASSGFEENTQDLKSE</original>
    <variation>VGVKTQKENAD</variation>
    <location>
        <begin position="545"/>
        <end position="568"/>
    </location>
</feature>
<feature type="splice variant" id="VSP_034134" description="In isoform 5 and isoform 6." evidence="4 7">
    <original>LGLWCPQPWASSGFEENTQDLK</original>
    <variation>SMISRTCVDYL</variation>
    <location>
        <begin position="545"/>
        <end position="566"/>
    </location>
</feature>
<feature type="splice variant" id="VSP_034135" description="In isoform 5 and isoform 6." evidence="4 7">
    <location>
        <begin position="567"/>
        <end position="575"/>
    </location>
</feature>
<feature type="splice variant" id="VSP_034136" description="In isoform 7." evidence="6 7">
    <location>
        <begin position="569"/>
        <end position="575"/>
    </location>
</feature>
<feature type="sequence variant" id="VAR_043934" description="In dbSNP:rs6658555." evidence="3">
    <original>R</original>
    <variation>Q</variation>
    <location>
        <position position="451"/>
    </location>
</feature>
<feature type="sequence variant" id="VAR_043935" description="In dbSNP:rs3736764.">
    <original>A</original>
    <variation>T</variation>
    <location>
        <position position="455"/>
    </location>
</feature>
<feature type="sequence variant" id="VAR_043936" description="In dbSNP:rs12069022.">
    <original>G</original>
    <variation>D</variation>
    <location>
        <position position="571"/>
    </location>
</feature>
<feature type="sequence conflict" description="In Ref. 6; AAH37830." evidence="8" ref="6">
    <original>P</original>
    <variation>H</variation>
    <location>
        <position position="204"/>
    </location>
</feature>
<feature type="sequence conflict" description="In Ref. 3; CAD98103." evidence="8" ref="3">
    <original>A</original>
    <variation>T</variation>
    <location>
        <position position="236"/>
    </location>
</feature>
<feature type="sequence conflict" description="In Ref. 3; CAD97948." evidence="8" ref="3">
    <original>C</original>
    <variation>Y</variation>
    <location>
        <position position="274"/>
    </location>
</feature>
<feature type="sequence conflict" description="In Ref. 3; CAD98103." evidence="8" ref="3">
    <original>E</original>
    <variation>V</variation>
    <location>
        <position position="282"/>
    </location>
</feature>
<feature type="sequence conflict" description="In Ref. 3; CAD97948." evidence="8" ref="3">
    <original>R</original>
    <variation>I</variation>
    <location>
        <position position="287"/>
    </location>
</feature>
<evidence type="ECO:0000255" key="1"/>
<evidence type="ECO:0000256" key="2">
    <source>
        <dbReference type="SAM" id="MobiDB-lite"/>
    </source>
</evidence>
<evidence type="ECO:0000269" key="3">
    <source>
    </source>
</evidence>
<evidence type="ECO:0000303" key="4">
    <source>
    </source>
</evidence>
<evidence type="ECO:0000303" key="5">
    <source>
    </source>
</evidence>
<evidence type="ECO:0000303" key="6">
    <source>
    </source>
</evidence>
<evidence type="ECO:0000303" key="7">
    <source>
    </source>
</evidence>
<evidence type="ECO:0000305" key="8"/>
<accession>Q8TDW4</accession>
<accession>A8K4S7</accession>
<accession>Q49AH6</accession>
<accession>Q5TEI4</accession>
<accession>Q5U5K6</accession>
<accession>Q6N067</accession>
<accession>Q7Z2Z0</accession>
<accession>Q7Z3C2</accession>
<accession>Q8N7P8</accession>
<accession>Q8TDW1</accession>
<accession>Q8TDW2</accession>
<accession>Q8TDW3</accession>
<accession>Q9NXF3</accession>